<feature type="chain" id="PRO_1000080202" description="Putative membrane protein insertion efficiency factor">
    <location>
        <begin position="1"/>
        <end position="84"/>
    </location>
</feature>
<feature type="region of interest" description="Disordered" evidence="2">
    <location>
        <begin position="60"/>
        <end position="84"/>
    </location>
</feature>
<feature type="compositionally biased region" description="Basic and acidic residues" evidence="2">
    <location>
        <begin position="68"/>
        <end position="84"/>
    </location>
</feature>
<name>YIDD_STRGC</name>
<organism>
    <name type="scientific">Streptococcus gordonii (strain Challis / ATCC 35105 / BCRC 15272 / CH1 / DL1 / V288)</name>
    <dbReference type="NCBI Taxonomy" id="467705"/>
    <lineage>
        <taxon>Bacteria</taxon>
        <taxon>Bacillati</taxon>
        <taxon>Bacillota</taxon>
        <taxon>Bacilli</taxon>
        <taxon>Lactobacillales</taxon>
        <taxon>Streptococcaceae</taxon>
        <taxon>Streptococcus</taxon>
    </lineage>
</organism>
<evidence type="ECO:0000255" key="1">
    <source>
        <dbReference type="HAMAP-Rule" id="MF_00386"/>
    </source>
</evidence>
<evidence type="ECO:0000256" key="2">
    <source>
        <dbReference type="SAM" id="MobiDB-lite"/>
    </source>
</evidence>
<dbReference type="EMBL" id="CP000725">
    <property type="protein sequence ID" value="ABV10939.1"/>
    <property type="molecule type" value="Genomic_DNA"/>
</dbReference>
<dbReference type="STRING" id="467705.SGO_1668"/>
<dbReference type="KEGG" id="sgo:SGO_1668"/>
<dbReference type="eggNOG" id="COG0759">
    <property type="taxonomic scope" value="Bacteria"/>
</dbReference>
<dbReference type="HOGENOM" id="CLU_144811_5_2_9"/>
<dbReference type="Proteomes" id="UP000001131">
    <property type="component" value="Chromosome"/>
</dbReference>
<dbReference type="GO" id="GO:0005886">
    <property type="term" value="C:plasma membrane"/>
    <property type="evidence" value="ECO:0007669"/>
    <property type="project" value="UniProtKB-SubCell"/>
</dbReference>
<dbReference type="HAMAP" id="MF_00386">
    <property type="entry name" value="UPF0161_YidD"/>
    <property type="match status" value="1"/>
</dbReference>
<dbReference type="InterPro" id="IPR002696">
    <property type="entry name" value="Membr_insert_effic_factor_YidD"/>
</dbReference>
<dbReference type="NCBIfam" id="TIGR00278">
    <property type="entry name" value="membrane protein insertion efficiency factor YidD"/>
    <property type="match status" value="1"/>
</dbReference>
<dbReference type="PANTHER" id="PTHR33383">
    <property type="entry name" value="MEMBRANE PROTEIN INSERTION EFFICIENCY FACTOR-RELATED"/>
    <property type="match status" value="1"/>
</dbReference>
<dbReference type="PANTHER" id="PTHR33383:SF1">
    <property type="entry name" value="MEMBRANE PROTEIN INSERTION EFFICIENCY FACTOR-RELATED"/>
    <property type="match status" value="1"/>
</dbReference>
<dbReference type="Pfam" id="PF01809">
    <property type="entry name" value="YidD"/>
    <property type="match status" value="1"/>
</dbReference>
<dbReference type="SMART" id="SM01234">
    <property type="entry name" value="Haemolytic"/>
    <property type="match status" value="1"/>
</dbReference>
<proteinExistence type="inferred from homology"/>
<comment type="function">
    <text evidence="1">Could be involved in insertion of integral membrane proteins into the membrane.</text>
</comment>
<comment type="subcellular location">
    <subcellularLocation>
        <location evidence="1">Cell membrane</location>
        <topology evidence="1">Peripheral membrane protein</topology>
        <orientation evidence="1">Cytoplasmic side</orientation>
    </subcellularLocation>
</comment>
<comment type="similarity">
    <text evidence="1">Belongs to the UPF0161 family.</text>
</comment>
<sequence length="84" mass="9752">MIKKLLIAPVRFYQRFISPAFPPSCRFRPTCSNYMIEAIQKHGAKGVLMGLARIFRCHPWSQPGEDPVPDHFSLKRNDTRKQSH</sequence>
<accession>A8AYT5</accession>
<protein>
    <recommendedName>
        <fullName evidence="1">Putative membrane protein insertion efficiency factor</fullName>
    </recommendedName>
</protein>
<gene>
    <name type="ordered locus">SGO_1668</name>
</gene>
<reference key="1">
    <citation type="journal article" date="2007" name="J. Bacteriol.">
        <title>Genome-wide transcriptional changes in Streptococcus gordonii in response to competence signaling peptide.</title>
        <authorList>
            <person name="Vickerman M.M."/>
            <person name="Iobst S."/>
            <person name="Jesionowski A.M."/>
            <person name="Gill S.R."/>
        </authorList>
    </citation>
    <scope>NUCLEOTIDE SEQUENCE [LARGE SCALE GENOMIC DNA]</scope>
    <source>
        <strain>Challis / ATCC 35105 / BCRC 15272 / CH1 / DL1 / V288</strain>
    </source>
</reference>
<keyword id="KW-1003">Cell membrane</keyword>
<keyword id="KW-0472">Membrane</keyword>
<keyword id="KW-1185">Reference proteome</keyword>